<comment type="function">
    <text evidence="1">Produces ATP from ADP in the presence of a proton gradient across the membrane. The gamma chain is believed to be important in regulating ATPase activity and the flow of protons through the CF(0) complex.</text>
</comment>
<comment type="subunit">
    <text evidence="1">F-type ATPases have 2 components, CF(1) - the catalytic core - and CF(0) - the membrane proton channel. CF(1) has five subunits: alpha(3), beta(3), gamma(1), delta(1), epsilon(1). CF(0) has three main subunits: a, b and c.</text>
</comment>
<comment type="subcellular location">
    <subcellularLocation>
        <location evidence="1">Cell inner membrane</location>
        <topology evidence="1">Peripheral membrane protein</topology>
    </subcellularLocation>
</comment>
<comment type="similarity">
    <text evidence="1">Belongs to the ATPase gamma chain family.</text>
</comment>
<reference key="1">
    <citation type="submission" date="2008-10" db="EMBL/GenBank/DDBJ databases">
        <title>Complete sequence of Desulfovibrio vulgaris str. 'Miyazaki F'.</title>
        <authorList>
            <person name="Lucas S."/>
            <person name="Copeland A."/>
            <person name="Lapidus A."/>
            <person name="Glavina del Rio T."/>
            <person name="Dalin E."/>
            <person name="Tice H."/>
            <person name="Bruce D."/>
            <person name="Goodwin L."/>
            <person name="Pitluck S."/>
            <person name="Sims D."/>
            <person name="Brettin T."/>
            <person name="Detter J.C."/>
            <person name="Han C."/>
            <person name="Larimer F."/>
            <person name="Land M."/>
            <person name="Hauser L."/>
            <person name="Kyrpides N."/>
            <person name="Mikhailova N."/>
            <person name="Hazen T.C."/>
            <person name="Richardson P."/>
        </authorList>
    </citation>
    <scope>NUCLEOTIDE SEQUENCE [LARGE SCALE GENOMIC DNA]</scope>
    <source>
        <strain>DSM 19637 / Miyazaki F</strain>
    </source>
</reference>
<gene>
    <name evidence="1" type="primary">atpG</name>
    <name type="ordered locus">DvMF_2830</name>
</gene>
<accession>B8DRD1</accession>
<protein>
    <recommendedName>
        <fullName evidence="1">ATP synthase gamma chain</fullName>
    </recommendedName>
    <alternativeName>
        <fullName evidence="1">ATP synthase F1 sector gamma subunit</fullName>
    </alternativeName>
    <alternativeName>
        <fullName evidence="1">F-ATPase gamma subunit</fullName>
    </alternativeName>
</protein>
<keyword id="KW-0066">ATP synthesis</keyword>
<keyword id="KW-0997">Cell inner membrane</keyword>
<keyword id="KW-1003">Cell membrane</keyword>
<keyword id="KW-0139">CF(1)</keyword>
<keyword id="KW-0375">Hydrogen ion transport</keyword>
<keyword id="KW-0406">Ion transport</keyword>
<keyword id="KW-0472">Membrane</keyword>
<keyword id="KW-0813">Transport</keyword>
<feature type="chain" id="PRO_1000134139" description="ATP synthase gamma chain">
    <location>
        <begin position="1"/>
        <end position="293"/>
    </location>
</feature>
<sequence>MPSLKDVKVKIAGVKKTKQITKAMNMVASAKLRGAQQRIERFRPYAAKFYDMLGDLASKADSSVHPLLEVREEIKTCGIVLATSDRGLCGSFNSNLITTALKLAAKKAAEGKKVKFYCVGKKGRDAARKTDHEVAMALADQMGSFDFQLANRIGLDVINAYLARELDEVIMVYGEFVSMAKQLPIALPILPIAPKEEEAAPAAPASNKEYIYEPAVEGLLAELLPRFIKVQLYRGLLDTSASEHAARMAAMDNATRSCDDMIGSLTLLFNKTRQASITRDLMDIVGGAEALKG</sequence>
<proteinExistence type="inferred from homology"/>
<organism>
    <name type="scientific">Nitratidesulfovibrio vulgaris (strain DSM 19637 / Miyazaki F)</name>
    <name type="common">Desulfovibrio vulgaris</name>
    <dbReference type="NCBI Taxonomy" id="883"/>
    <lineage>
        <taxon>Bacteria</taxon>
        <taxon>Pseudomonadati</taxon>
        <taxon>Thermodesulfobacteriota</taxon>
        <taxon>Desulfovibrionia</taxon>
        <taxon>Desulfovibrionales</taxon>
        <taxon>Desulfovibrionaceae</taxon>
        <taxon>Nitratidesulfovibrio</taxon>
    </lineage>
</organism>
<dbReference type="EMBL" id="CP001197">
    <property type="protein sequence ID" value="ACL09768.1"/>
    <property type="molecule type" value="Genomic_DNA"/>
</dbReference>
<dbReference type="SMR" id="B8DRD1"/>
<dbReference type="STRING" id="883.DvMF_2830"/>
<dbReference type="KEGG" id="dvm:DvMF_2830"/>
<dbReference type="eggNOG" id="COG0224">
    <property type="taxonomic scope" value="Bacteria"/>
</dbReference>
<dbReference type="HOGENOM" id="CLU_050669_0_1_7"/>
<dbReference type="OrthoDB" id="9812769at2"/>
<dbReference type="GO" id="GO:0005886">
    <property type="term" value="C:plasma membrane"/>
    <property type="evidence" value="ECO:0007669"/>
    <property type="project" value="UniProtKB-SubCell"/>
</dbReference>
<dbReference type="GO" id="GO:0045259">
    <property type="term" value="C:proton-transporting ATP synthase complex"/>
    <property type="evidence" value="ECO:0007669"/>
    <property type="project" value="UniProtKB-KW"/>
</dbReference>
<dbReference type="GO" id="GO:0005524">
    <property type="term" value="F:ATP binding"/>
    <property type="evidence" value="ECO:0007669"/>
    <property type="project" value="UniProtKB-UniRule"/>
</dbReference>
<dbReference type="GO" id="GO:0046933">
    <property type="term" value="F:proton-transporting ATP synthase activity, rotational mechanism"/>
    <property type="evidence" value="ECO:0007669"/>
    <property type="project" value="UniProtKB-UniRule"/>
</dbReference>
<dbReference type="GO" id="GO:0042777">
    <property type="term" value="P:proton motive force-driven plasma membrane ATP synthesis"/>
    <property type="evidence" value="ECO:0007669"/>
    <property type="project" value="UniProtKB-UniRule"/>
</dbReference>
<dbReference type="CDD" id="cd12151">
    <property type="entry name" value="F1-ATPase_gamma"/>
    <property type="match status" value="1"/>
</dbReference>
<dbReference type="Gene3D" id="3.40.1380.10">
    <property type="match status" value="1"/>
</dbReference>
<dbReference type="Gene3D" id="1.10.287.80">
    <property type="entry name" value="ATP synthase, gamma subunit, helix hairpin domain"/>
    <property type="match status" value="1"/>
</dbReference>
<dbReference type="HAMAP" id="MF_00815">
    <property type="entry name" value="ATP_synth_gamma_bact"/>
    <property type="match status" value="1"/>
</dbReference>
<dbReference type="InterPro" id="IPR035968">
    <property type="entry name" value="ATP_synth_F1_ATPase_gsu"/>
</dbReference>
<dbReference type="InterPro" id="IPR000131">
    <property type="entry name" value="ATP_synth_F1_gsu"/>
</dbReference>
<dbReference type="NCBIfam" id="TIGR01146">
    <property type="entry name" value="ATPsyn_F1gamma"/>
    <property type="match status" value="1"/>
</dbReference>
<dbReference type="NCBIfam" id="NF009957">
    <property type="entry name" value="PRK13424.1"/>
    <property type="match status" value="1"/>
</dbReference>
<dbReference type="PANTHER" id="PTHR11693">
    <property type="entry name" value="ATP SYNTHASE GAMMA CHAIN"/>
    <property type="match status" value="1"/>
</dbReference>
<dbReference type="PANTHER" id="PTHR11693:SF22">
    <property type="entry name" value="ATP SYNTHASE SUBUNIT GAMMA, MITOCHONDRIAL"/>
    <property type="match status" value="1"/>
</dbReference>
<dbReference type="Pfam" id="PF00231">
    <property type="entry name" value="ATP-synt"/>
    <property type="match status" value="1"/>
</dbReference>
<dbReference type="PRINTS" id="PR00126">
    <property type="entry name" value="ATPASEGAMMA"/>
</dbReference>
<dbReference type="SUPFAM" id="SSF52943">
    <property type="entry name" value="ATP synthase (F1-ATPase), gamma subunit"/>
    <property type="match status" value="1"/>
</dbReference>
<name>ATPG_NITV9</name>
<evidence type="ECO:0000255" key="1">
    <source>
        <dbReference type="HAMAP-Rule" id="MF_00815"/>
    </source>
</evidence>